<sequence length="205" mass="22939">MSEIKLNYHKTHFLTSAPNIRSIPEDTGIEIAFAGRSNAGKSTALNALTNQKNLARTSKTPGRTQLINLFEVEPNCKLVDLPGYGYAAVPEQMKIQWQKSLGEYLQKRECLAGLVVLMDIRHPLKDLDQQMIEWAVSANLPVLLLLTKADKLSQSARSKQVKMVREAILPFQGDIQVEAFSAQNKIGIDKLAVKLDFWFSPLFAE</sequence>
<accession>P46453</accession>
<comment type="function">
    <text evidence="1">Necessary for normal cell division and for the maintenance of normal septation.</text>
</comment>
<comment type="cofactor">
    <cofactor evidence="1">
        <name>Mg(2+)</name>
        <dbReference type="ChEBI" id="CHEBI:18420"/>
    </cofactor>
</comment>
<comment type="similarity">
    <text evidence="1">Belongs to the TRAFAC class TrmE-Era-EngA-EngB-Septin-like GTPase superfamily. EngB GTPase family.</text>
</comment>
<gene>
    <name evidence="1" type="primary">engB</name>
    <name type="ordered locus">HI_1118</name>
</gene>
<keyword id="KW-0131">Cell cycle</keyword>
<keyword id="KW-0132">Cell division</keyword>
<keyword id="KW-0342">GTP-binding</keyword>
<keyword id="KW-0460">Magnesium</keyword>
<keyword id="KW-0479">Metal-binding</keyword>
<keyword id="KW-0547">Nucleotide-binding</keyword>
<keyword id="KW-1185">Reference proteome</keyword>
<keyword id="KW-0717">Septation</keyword>
<dbReference type="EMBL" id="L42023">
    <property type="protein sequence ID" value="AAC22772.1"/>
    <property type="molecule type" value="Genomic_DNA"/>
</dbReference>
<dbReference type="RefSeq" id="NP_439275.1">
    <property type="nucleotide sequence ID" value="NC_000907.1"/>
</dbReference>
<dbReference type="SMR" id="P46453"/>
<dbReference type="STRING" id="71421.HI_1118"/>
<dbReference type="EnsemblBacteria" id="AAC22772">
    <property type="protein sequence ID" value="AAC22772"/>
    <property type="gene ID" value="HI_1118"/>
</dbReference>
<dbReference type="KEGG" id="hin:HI_1118"/>
<dbReference type="PATRIC" id="fig|71421.8.peg.1167"/>
<dbReference type="eggNOG" id="COG0218">
    <property type="taxonomic scope" value="Bacteria"/>
</dbReference>
<dbReference type="HOGENOM" id="CLU_033732_1_0_6"/>
<dbReference type="OrthoDB" id="9804921at2"/>
<dbReference type="PhylomeDB" id="P46453"/>
<dbReference type="BioCyc" id="HINF71421:G1GJ1-1153-MONOMER"/>
<dbReference type="Proteomes" id="UP000000579">
    <property type="component" value="Chromosome"/>
</dbReference>
<dbReference type="GO" id="GO:0005829">
    <property type="term" value="C:cytosol"/>
    <property type="evidence" value="ECO:0000318"/>
    <property type="project" value="GO_Central"/>
</dbReference>
<dbReference type="GO" id="GO:0005525">
    <property type="term" value="F:GTP binding"/>
    <property type="evidence" value="ECO:0007669"/>
    <property type="project" value="UniProtKB-UniRule"/>
</dbReference>
<dbReference type="GO" id="GO:0046872">
    <property type="term" value="F:metal ion binding"/>
    <property type="evidence" value="ECO:0007669"/>
    <property type="project" value="UniProtKB-KW"/>
</dbReference>
<dbReference type="GO" id="GO:0000917">
    <property type="term" value="P:division septum assembly"/>
    <property type="evidence" value="ECO:0007669"/>
    <property type="project" value="UniProtKB-KW"/>
</dbReference>
<dbReference type="CDD" id="cd01876">
    <property type="entry name" value="YihA_EngB"/>
    <property type="match status" value="1"/>
</dbReference>
<dbReference type="FunFam" id="3.40.50.300:FF:000098">
    <property type="entry name" value="Probable GTP-binding protein EngB"/>
    <property type="match status" value="1"/>
</dbReference>
<dbReference type="Gene3D" id="3.40.50.300">
    <property type="entry name" value="P-loop containing nucleotide triphosphate hydrolases"/>
    <property type="match status" value="1"/>
</dbReference>
<dbReference type="HAMAP" id="MF_00321">
    <property type="entry name" value="GTPase_EngB"/>
    <property type="match status" value="1"/>
</dbReference>
<dbReference type="InterPro" id="IPR030393">
    <property type="entry name" value="G_ENGB_dom"/>
</dbReference>
<dbReference type="InterPro" id="IPR006073">
    <property type="entry name" value="GTP-bd"/>
</dbReference>
<dbReference type="InterPro" id="IPR019987">
    <property type="entry name" value="GTP-bd_ribosome_bio_YsxC"/>
</dbReference>
<dbReference type="InterPro" id="IPR027417">
    <property type="entry name" value="P-loop_NTPase"/>
</dbReference>
<dbReference type="NCBIfam" id="TIGR03598">
    <property type="entry name" value="GTPase_YsxC"/>
    <property type="match status" value="1"/>
</dbReference>
<dbReference type="PANTHER" id="PTHR11649:SF13">
    <property type="entry name" value="ENGB-TYPE G DOMAIN-CONTAINING PROTEIN"/>
    <property type="match status" value="1"/>
</dbReference>
<dbReference type="PANTHER" id="PTHR11649">
    <property type="entry name" value="MSS1/TRME-RELATED GTP-BINDING PROTEIN"/>
    <property type="match status" value="1"/>
</dbReference>
<dbReference type="Pfam" id="PF01926">
    <property type="entry name" value="MMR_HSR1"/>
    <property type="match status" value="1"/>
</dbReference>
<dbReference type="SUPFAM" id="SSF52540">
    <property type="entry name" value="P-loop containing nucleoside triphosphate hydrolases"/>
    <property type="match status" value="1"/>
</dbReference>
<dbReference type="PROSITE" id="PS51706">
    <property type="entry name" value="G_ENGB"/>
    <property type="match status" value="1"/>
</dbReference>
<reference key="1">
    <citation type="journal article" date="1995" name="Science">
        <title>Whole-genome random sequencing and assembly of Haemophilus influenzae Rd.</title>
        <authorList>
            <person name="Fleischmann R.D."/>
            <person name="Adams M.D."/>
            <person name="White O."/>
            <person name="Clayton R.A."/>
            <person name="Kirkness E.F."/>
            <person name="Kerlavage A.R."/>
            <person name="Bult C.J."/>
            <person name="Tomb J.-F."/>
            <person name="Dougherty B.A."/>
            <person name="Merrick J.M."/>
            <person name="McKenney K."/>
            <person name="Sutton G.G."/>
            <person name="FitzHugh W."/>
            <person name="Fields C.A."/>
            <person name="Gocayne J.D."/>
            <person name="Scott J.D."/>
            <person name="Shirley R."/>
            <person name="Liu L.-I."/>
            <person name="Glodek A."/>
            <person name="Kelley J.M."/>
            <person name="Weidman J.F."/>
            <person name="Phillips C.A."/>
            <person name="Spriggs T."/>
            <person name="Hedblom E."/>
            <person name="Cotton M.D."/>
            <person name="Utterback T.R."/>
            <person name="Hanna M.C."/>
            <person name="Nguyen D.T."/>
            <person name="Saudek D.M."/>
            <person name="Brandon R.C."/>
            <person name="Fine L.D."/>
            <person name="Fritchman J.L."/>
            <person name="Fuhrmann J.L."/>
            <person name="Geoghagen N.S.M."/>
            <person name="Gnehm C.L."/>
            <person name="McDonald L.A."/>
            <person name="Small K.V."/>
            <person name="Fraser C.M."/>
            <person name="Smith H.O."/>
            <person name="Venter J.C."/>
        </authorList>
    </citation>
    <scope>NUCLEOTIDE SEQUENCE [LARGE SCALE GENOMIC DNA]</scope>
    <source>
        <strain>ATCC 51907 / DSM 11121 / KW20 / Rd</strain>
    </source>
</reference>
<feature type="chain" id="PRO_0000157752" description="Probable GTP-binding protein EngB">
    <location>
        <begin position="1"/>
        <end position="205"/>
    </location>
</feature>
<feature type="domain" description="EngB-type G" evidence="1">
    <location>
        <begin position="27"/>
        <end position="201"/>
    </location>
</feature>
<feature type="binding site" evidence="1">
    <location>
        <begin position="35"/>
        <end position="42"/>
    </location>
    <ligand>
        <name>GTP</name>
        <dbReference type="ChEBI" id="CHEBI:37565"/>
    </ligand>
</feature>
<feature type="binding site" evidence="1">
    <location>
        <position position="42"/>
    </location>
    <ligand>
        <name>Mg(2+)</name>
        <dbReference type="ChEBI" id="CHEBI:18420"/>
    </ligand>
</feature>
<feature type="binding site" evidence="1">
    <location>
        <begin position="62"/>
        <end position="66"/>
    </location>
    <ligand>
        <name>GTP</name>
        <dbReference type="ChEBI" id="CHEBI:37565"/>
    </ligand>
</feature>
<feature type="binding site" evidence="1">
    <location>
        <position position="64"/>
    </location>
    <ligand>
        <name>Mg(2+)</name>
        <dbReference type="ChEBI" id="CHEBI:18420"/>
    </ligand>
</feature>
<feature type="binding site" evidence="1">
    <location>
        <begin position="80"/>
        <end position="83"/>
    </location>
    <ligand>
        <name>GTP</name>
        <dbReference type="ChEBI" id="CHEBI:37565"/>
    </ligand>
</feature>
<feature type="binding site" evidence="1">
    <location>
        <begin position="147"/>
        <end position="150"/>
    </location>
    <ligand>
        <name>GTP</name>
        <dbReference type="ChEBI" id="CHEBI:37565"/>
    </ligand>
</feature>
<feature type="binding site" evidence="1">
    <location>
        <begin position="180"/>
        <end position="182"/>
    </location>
    <ligand>
        <name>GTP</name>
        <dbReference type="ChEBI" id="CHEBI:37565"/>
    </ligand>
</feature>
<organism>
    <name type="scientific">Haemophilus influenzae (strain ATCC 51907 / DSM 11121 / KW20 / Rd)</name>
    <dbReference type="NCBI Taxonomy" id="71421"/>
    <lineage>
        <taxon>Bacteria</taxon>
        <taxon>Pseudomonadati</taxon>
        <taxon>Pseudomonadota</taxon>
        <taxon>Gammaproteobacteria</taxon>
        <taxon>Pasteurellales</taxon>
        <taxon>Pasteurellaceae</taxon>
        <taxon>Haemophilus</taxon>
    </lineage>
</organism>
<name>ENGB_HAEIN</name>
<protein>
    <recommendedName>
        <fullName evidence="1">Probable GTP-binding protein EngB</fullName>
    </recommendedName>
</protein>
<proteinExistence type="inferred from homology"/>
<evidence type="ECO:0000255" key="1">
    <source>
        <dbReference type="HAMAP-Rule" id="MF_00321"/>
    </source>
</evidence>